<reference key="1">
    <citation type="journal article" date="2006" name="J. Bacteriol.">
        <title>Whole-genome sequence of Listeria welshimeri reveals common steps in genome reduction with Listeria innocua as compared to Listeria monocytogenes.</title>
        <authorList>
            <person name="Hain T."/>
            <person name="Steinweg C."/>
            <person name="Kuenne C.T."/>
            <person name="Billion A."/>
            <person name="Ghai R."/>
            <person name="Chatterjee S.S."/>
            <person name="Domann E."/>
            <person name="Kaerst U."/>
            <person name="Goesmann A."/>
            <person name="Bekel T."/>
            <person name="Bartels D."/>
            <person name="Kaiser O."/>
            <person name="Meyer F."/>
            <person name="Puehler A."/>
            <person name="Weisshaar B."/>
            <person name="Wehland J."/>
            <person name="Liang C."/>
            <person name="Dandekar T."/>
            <person name="Lampidis R."/>
            <person name="Kreft J."/>
            <person name="Goebel W."/>
            <person name="Chakraborty T."/>
        </authorList>
    </citation>
    <scope>NUCLEOTIDE SEQUENCE [LARGE SCALE GENOMIC DNA]</scope>
    <source>
        <strain>ATCC 35897 / DSM 20650 / CCUG 15529 / CIP 8149 / NCTC 11857 / SLCC 5334 / V8</strain>
    </source>
</reference>
<gene>
    <name evidence="1" type="primary">mscL</name>
    <name type="ordered locus">lwe2084</name>
</gene>
<keyword id="KW-1003">Cell membrane</keyword>
<keyword id="KW-0407">Ion channel</keyword>
<keyword id="KW-0406">Ion transport</keyword>
<keyword id="KW-0472">Membrane</keyword>
<keyword id="KW-0812">Transmembrane</keyword>
<keyword id="KW-1133">Transmembrane helix</keyword>
<keyword id="KW-0813">Transport</keyword>
<sequence>MKKMLVEFRDFALKGNVLDLAVAVVIGAAFGKIVSSLVDNIIMPVVGVLLGGLDFTKLSVTVGKSVIQYGAFIQSIVDFIIIAFAIFIFVKILTSFMKKKEQPVEETPVPPTEEYLKEIRDLLKEQQKEI</sequence>
<protein>
    <recommendedName>
        <fullName evidence="1">Large-conductance mechanosensitive channel</fullName>
    </recommendedName>
</protein>
<accession>A0AKH0</accession>
<proteinExistence type="inferred from homology"/>
<name>MSCL_LISW6</name>
<dbReference type="EMBL" id="AM263198">
    <property type="protein sequence ID" value="CAK21502.1"/>
    <property type="molecule type" value="Genomic_DNA"/>
</dbReference>
<dbReference type="RefSeq" id="WP_011702843.1">
    <property type="nucleotide sequence ID" value="NC_008555.1"/>
</dbReference>
<dbReference type="SMR" id="A0AKH0"/>
<dbReference type="STRING" id="386043.lwe2084"/>
<dbReference type="GeneID" id="61189984"/>
<dbReference type="KEGG" id="lwe:lwe2084"/>
<dbReference type="eggNOG" id="COG1970">
    <property type="taxonomic scope" value="Bacteria"/>
</dbReference>
<dbReference type="HOGENOM" id="CLU_095787_0_0_9"/>
<dbReference type="OrthoDB" id="9810350at2"/>
<dbReference type="Proteomes" id="UP000000779">
    <property type="component" value="Chromosome"/>
</dbReference>
<dbReference type="GO" id="GO:0005886">
    <property type="term" value="C:plasma membrane"/>
    <property type="evidence" value="ECO:0007669"/>
    <property type="project" value="UniProtKB-SubCell"/>
</dbReference>
<dbReference type="GO" id="GO:0008381">
    <property type="term" value="F:mechanosensitive monoatomic ion channel activity"/>
    <property type="evidence" value="ECO:0007669"/>
    <property type="project" value="UniProtKB-UniRule"/>
</dbReference>
<dbReference type="FunFam" id="1.10.1200.120:FF:000003">
    <property type="entry name" value="Large-conductance mechanosensitive channel"/>
    <property type="match status" value="1"/>
</dbReference>
<dbReference type="Gene3D" id="1.10.1200.120">
    <property type="entry name" value="Large-conductance mechanosensitive channel, MscL, domain 1"/>
    <property type="match status" value="1"/>
</dbReference>
<dbReference type="HAMAP" id="MF_00115">
    <property type="entry name" value="MscL"/>
    <property type="match status" value="1"/>
</dbReference>
<dbReference type="InterPro" id="IPR019823">
    <property type="entry name" value="Mechanosensitive_channel_CS"/>
</dbReference>
<dbReference type="InterPro" id="IPR001185">
    <property type="entry name" value="MS_channel"/>
</dbReference>
<dbReference type="InterPro" id="IPR037673">
    <property type="entry name" value="MSC/AndL"/>
</dbReference>
<dbReference type="InterPro" id="IPR036019">
    <property type="entry name" value="MscL_channel"/>
</dbReference>
<dbReference type="NCBIfam" id="TIGR00220">
    <property type="entry name" value="mscL"/>
    <property type="match status" value="1"/>
</dbReference>
<dbReference type="NCBIfam" id="NF001843">
    <property type="entry name" value="PRK00567.1-4"/>
    <property type="match status" value="1"/>
</dbReference>
<dbReference type="NCBIfam" id="NF010558">
    <property type="entry name" value="PRK13953.1"/>
    <property type="match status" value="1"/>
</dbReference>
<dbReference type="PANTHER" id="PTHR30266:SF2">
    <property type="entry name" value="LARGE-CONDUCTANCE MECHANOSENSITIVE CHANNEL"/>
    <property type="match status" value="1"/>
</dbReference>
<dbReference type="PANTHER" id="PTHR30266">
    <property type="entry name" value="MECHANOSENSITIVE CHANNEL MSCL"/>
    <property type="match status" value="1"/>
</dbReference>
<dbReference type="Pfam" id="PF01741">
    <property type="entry name" value="MscL"/>
    <property type="match status" value="1"/>
</dbReference>
<dbReference type="PRINTS" id="PR01264">
    <property type="entry name" value="MECHCHANNEL"/>
</dbReference>
<dbReference type="SUPFAM" id="SSF81330">
    <property type="entry name" value="Gated mechanosensitive channel"/>
    <property type="match status" value="1"/>
</dbReference>
<dbReference type="PROSITE" id="PS01327">
    <property type="entry name" value="MSCL"/>
    <property type="match status" value="1"/>
</dbReference>
<organism>
    <name type="scientific">Listeria welshimeri serovar 6b (strain ATCC 35897 / DSM 20650 / CCUG 15529 / CIP 8149 / NCTC 11857 / SLCC 5334 / V8)</name>
    <dbReference type="NCBI Taxonomy" id="386043"/>
    <lineage>
        <taxon>Bacteria</taxon>
        <taxon>Bacillati</taxon>
        <taxon>Bacillota</taxon>
        <taxon>Bacilli</taxon>
        <taxon>Bacillales</taxon>
        <taxon>Listeriaceae</taxon>
        <taxon>Listeria</taxon>
    </lineage>
</organism>
<comment type="function">
    <text evidence="1">Channel that opens in response to stretch forces in the membrane lipid bilayer. May participate in the regulation of osmotic pressure changes within the cell.</text>
</comment>
<comment type="subunit">
    <text evidence="1">Homopentamer.</text>
</comment>
<comment type="subcellular location">
    <subcellularLocation>
        <location evidence="1">Cell membrane</location>
        <topology evidence="1">Multi-pass membrane protein</topology>
    </subcellularLocation>
</comment>
<comment type="similarity">
    <text evidence="1">Belongs to the MscL family.</text>
</comment>
<evidence type="ECO:0000255" key="1">
    <source>
        <dbReference type="HAMAP-Rule" id="MF_00115"/>
    </source>
</evidence>
<feature type="chain" id="PRO_1000015396" description="Large-conductance mechanosensitive channel">
    <location>
        <begin position="1"/>
        <end position="130"/>
    </location>
</feature>
<feature type="transmembrane region" description="Helical" evidence="1">
    <location>
        <begin position="11"/>
        <end position="31"/>
    </location>
</feature>
<feature type="transmembrane region" description="Helical" evidence="1">
    <location>
        <begin position="70"/>
        <end position="90"/>
    </location>
</feature>